<accession>A3MA10</accession>
<reference key="1">
    <citation type="journal article" date="2007" name="Genes Dev.">
        <title>New insights into Acinetobacter baumannii pathogenesis revealed by high-density pyrosequencing and transposon mutagenesis.</title>
        <authorList>
            <person name="Smith M.G."/>
            <person name="Gianoulis T.A."/>
            <person name="Pukatzki S."/>
            <person name="Mekalanos J.J."/>
            <person name="Ornston L.N."/>
            <person name="Gerstein M."/>
            <person name="Snyder M."/>
        </authorList>
    </citation>
    <scope>NUCLEOTIDE SEQUENCE [LARGE SCALE GENOMIC DNA]</scope>
    <source>
        <strain>ATCC 17978 / DSM 105126 / CIP 53.77 / LMG 1025 / NCDC KC755 / 5377</strain>
    </source>
</reference>
<protein>
    <recommendedName>
        <fullName evidence="1">Disulfide bond formation protein B</fullName>
    </recommendedName>
    <alternativeName>
        <fullName evidence="1">Disulfide oxidoreductase</fullName>
    </alternativeName>
</protein>
<proteinExistence type="inferred from homology"/>
<name>DSBB_ACIBT</name>
<sequence>MRLSYRLVSGLLVLASIVGMSFALYLEHVKGLEPCPLCIFQRVGLMAMGFVALIAFLHNPVSNAIKRFYAFLAGVAILWSVGVAGRHVWLQHLPPDQVPSCGPGLNYLIDALPMKTVLQEVLSGSGECAAIDWTFLGQSLPVWSLAYFLLLLLVCLWQLFRFYPVFKTAKK</sequence>
<evidence type="ECO:0000255" key="1">
    <source>
        <dbReference type="HAMAP-Rule" id="MF_00286"/>
    </source>
</evidence>
<keyword id="KW-0997">Cell inner membrane</keyword>
<keyword id="KW-1003">Cell membrane</keyword>
<keyword id="KW-0143">Chaperone</keyword>
<keyword id="KW-1015">Disulfide bond</keyword>
<keyword id="KW-0249">Electron transport</keyword>
<keyword id="KW-0472">Membrane</keyword>
<keyword id="KW-0560">Oxidoreductase</keyword>
<keyword id="KW-0676">Redox-active center</keyword>
<keyword id="KW-0812">Transmembrane</keyword>
<keyword id="KW-1133">Transmembrane helix</keyword>
<keyword id="KW-0813">Transport</keyword>
<organism>
    <name type="scientific">Acinetobacter baumannii (strain ATCC 17978 / DSM 105126 / CIP 53.77 / LMG 1025 / NCDC KC755 / 5377)</name>
    <dbReference type="NCBI Taxonomy" id="400667"/>
    <lineage>
        <taxon>Bacteria</taxon>
        <taxon>Pseudomonadati</taxon>
        <taxon>Pseudomonadota</taxon>
        <taxon>Gammaproteobacteria</taxon>
        <taxon>Moraxellales</taxon>
        <taxon>Moraxellaceae</taxon>
        <taxon>Acinetobacter</taxon>
        <taxon>Acinetobacter calcoaceticus/baumannii complex</taxon>
    </lineage>
</organism>
<feature type="chain" id="PRO_0000298331" description="Disulfide bond formation protein B">
    <location>
        <begin position="1"/>
        <end position="171"/>
    </location>
</feature>
<feature type="topological domain" description="Cytoplasmic" evidence="1">
    <location>
        <begin position="1"/>
        <end position="8"/>
    </location>
</feature>
<feature type="transmembrane region" description="Helical" evidence="1">
    <location>
        <begin position="9"/>
        <end position="25"/>
    </location>
</feature>
<feature type="topological domain" description="Periplasmic" evidence="1">
    <location>
        <begin position="26"/>
        <end position="43"/>
    </location>
</feature>
<feature type="transmembrane region" description="Helical" evidence="1">
    <location>
        <begin position="44"/>
        <end position="60"/>
    </location>
</feature>
<feature type="topological domain" description="Cytoplasmic" evidence="1">
    <location>
        <begin position="61"/>
        <end position="67"/>
    </location>
</feature>
<feature type="transmembrane region" description="Helical" evidence="1">
    <location>
        <begin position="68"/>
        <end position="85"/>
    </location>
</feature>
<feature type="topological domain" description="Periplasmic" evidence="1">
    <location>
        <begin position="86"/>
        <end position="142"/>
    </location>
</feature>
<feature type="transmembrane region" description="Helical" evidence="1">
    <location>
        <begin position="143"/>
        <end position="161"/>
    </location>
</feature>
<feature type="topological domain" description="Cytoplasmic" evidence="1">
    <location>
        <begin position="162"/>
        <end position="171"/>
    </location>
</feature>
<feature type="disulfide bond" description="Redox-active" evidence="1">
    <location>
        <begin position="35"/>
        <end position="38"/>
    </location>
</feature>
<feature type="disulfide bond" description="Redox-active" evidence="1">
    <location>
        <begin position="101"/>
        <end position="128"/>
    </location>
</feature>
<dbReference type="EMBL" id="CP000521">
    <property type="protein sequence ID" value="ABO13754.2"/>
    <property type="molecule type" value="Genomic_DNA"/>
</dbReference>
<dbReference type="RefSeq" id="WP_001240040.1">
    <property type="nucleotide sequence ID" value="NZ_CP053098.1"/>
</dbReference>
<dbReference type="SMR" id="A3MA10"/>
<dbReference type="KEGG" id="acb:A1S_3365"/>
<dbReference type="HOGENOM" id="CLU_098660_1_1_6"/>
<dbReference type="GO" id="GO:0005886">
    <property type="term" value="C:plasma membrane"/>
    <property type="evidence" value="ECO:0007669"/>
    <property type="project" value="UniProtKB-SubCell"/>
</dbReference>
<dbReference type="GO" id="GO:0009055">
    <property type="term" value="F:electron transfer activity"/>
    <property type="evidence" value="ECO:0007669"/>
    <property type="project" value="UniProtKB-UniRule"/>
</dbReference>
<dbReference type="GO" id="GO:0015035">
    <property type="term" value="F:protein-disulfide reductase activity"/>
    <property type="evidence" value="ECO:0007669"/>
    <property type="project" value="UniProtKB-UniRule"/>
</dbReference>
<dbReference type="GO" id="GO:0006457">
    <property type="term" value="P:protein folding"/>
    <property type="evidence" value="ECO:0007669"/>
    <property type="project" value="InterPro"/>
</dbReference>
<dbReference type="Gene3D" id="1.20.1550.10">
    <property type="entry name" value="DsbB-like"/>
    <property type="match status" value="1"/>
</dbReference>
<dbReference type="HAMAP" id="MF_00286">
    <property type="entry name" value="DsbB"/>
    <property type="match status" value="1"/>
</dbReference>
<dbReference type="InterPro" id="IPR003752">
    <property type="entry name" value="DiS_bond_form_DsbB/BdbC"/>
</dbReference>
<dbReference type="InterPro" id="IPR022920">
    <property type="entry name" value="Disulphide_bond_form_DsbB"/>
</dbReference>
<dbReference type="InterPro" id="IPR050183">
    <property type="entry name" value="DsbB"/>
</dbReference>
<dbReference type="InterPro" id="IPR023380">
    <property type="entry name" value="DsbB-like_sf"/>
</dbReference>
<dbReference type="PANTHER" id="PTHR36570">
    <property type="entry name" value="DISULFIDE BOND FORMATION PROTEIN B"/>
    <property type="match status" value="1"/>
</dbReference>
<dbReference type="PANTHER" id="PTHR36570:SF3">
    <property type="entry name" value="DISULFIDE BOND FORMATION PROTEIN B"/>
    <property type="match status" value="1"/>
</dbReference>
<dbReference type="Pfam" id="PF02600">
    <property type="entry name" value="DsbB"/>
    <property type="match status" value="1"/>
</dbReference>
<dbReference type="SUPFAM" id="SSF158442">
    <property type="entry name" value="DsbB-like"/>
    <property type="match status" value="1"/>
</dbReference>
<comment type="function">
    <text evidence="1">Required for disulfide bond formation in some periplasmic proteins. Acts by oxidizing the DsbA protein.</text>
</comment>
<comment type="subcellular location">
    <subcellularLocation>
        <location evidence="1">Cell inner membrane</location>
        <topology evidence="1">Multi-pass membrane protein</topology>
    </subcellularLocation>
</comment>
<comment type="similarity">
    <text evidence="1">Belongs to the DsbB family.</text>
</comment>
<gene>
    <name evidence="1" type="primary">dsbB</name>
    <name type="ordered locus">A1S_3365</name>
</gene>